<reference key="1">
    <citation type="submission" date="2006-09" db="EMBL/GenBank/DDBJ databases">
        <authorList>
            <consortium name="The Klebsiella pneumonia Genome Sequencing Project"/>
            <person name="McClelland M."/>
            <person name="Sanderson E.K."/>
            <person name="Spieth J."/>
            <person name="Clifton W.S."/>
            <person name="Latreille P."/>
            <person name="Sabo A."/>
            <person name="Pepin K."/>
            <person name="Bhonagiri V."/>
            <person name="Porwollik S."/>
            <person name="Ali J."/>
            <person name="Wilson R.K."/>
        </authorList>
    </citation>
    <scope>NUCLEOTIDE SEQUENCE [LARGE SCALE GENOMIC DNA]</scope>
    <source>
        <strain>ATCC 700721 / MGH 78578</strain>
    </source>
</reference>
<accession>A6T6E2</accession>
<proteinExistence type="inferred from homology"/>
<sequence>MQTTSSQPRAIYYVVALQIWEYFSFYGMRALLILYLTNQLKYDDNHAYALFSAYCSLVYVTPILGGYLADKLLGNRMAVMLGALLMAIGHLVLGASETAPLFLYLSLAIIVCGYGLFKSNVSCLLGELYEPADPRRDGGFSLMYAAGNIGSIIAPIACGYVQEEYSWAMGFALAAIGMVAGLVIFLCGNRHFQHTAGVNRQALCARRFLLPNWGWLLVLLVTAPLLIAVLFWQEWSVYALIVATAIGLAVLARIYLRAETDKQRKDLRLIVVLTAFSLLFWAFAQQGGSSISLYIDRFVNRHIMSYEVPTAMFQSINAFAVMLCGMVLAWLVKESVNGNRTVRIWGKFALGLGLMSAGFCILTLSARWSAAYGQSSMPLMVLGLAVMGFAELFIDPVAMSQITRIEIPGVTGVLTGIYMLLSGAIANYLAGVIADQTSQASFDAAGAVNYSIDAYITVFSQITWGALACVGVVLVIWLYHSLKVRTRRLAVE</sequence>
<keyword id="KW-0997">Cell inner membrane</keyword>
<keyword id="KW-1003">Cell membrane</keyword>
<keyword id="KW-0472">Membrane</keyword>
<keyword id="KW-0571">Peptide transport</keyword>
<keyword id="KW-0653">Protein transport</keyword>
<keyword id="KW-0812">Transmembrane</keyword>
<keyword id="KW-1133">Transmembrane helix</keyword>
<keyword id="KW-0813">Transport</keyword>
<gene>
    <name evidence="1" type="primary">dtpD</name>
    <name type="ordered locus">KPN78578_07020</name>
    <name type="ORF">KPN_00720</name>
</gene>
<organism>
    <name type="scientific">Klebsiella pneumoniae subsp. pneumoniae (strain ATCC 700721 / MGH 78578)</name>
    <dbReference type="NCBI Taxonomy" id="272620"/>
    <lineage>
        <taxon>Bacteria</taxon>
        <taxon>Pseudomonadati</taxon>
        <taxon>Pseudomonadota</taxon>
        <taxon>Gammaproteobacteria</taxon>
        <taxon>Enterobacterales</taxon>
        <taxon>Enterobacteriaceae</taxon>
        <taxon>Klebsiella/Raoultella group</taxon>
        <taxon>Klebsiella</taxon>
        <taxon>Klebsiella pneumoniae complex</taxon>
    </lineage>
</organism>
<feature type="chain" id="PRO_0000395297" description="Dipeptide permease D">
    <location>
        <begin position="1"/>
        <end position="492"/>
    </location>
</feature>
<feature type="transmembrane region" description="Helical" evidence="1">
    <location>
        <begin position="14"/>
        <end position="34"/>
    </location>
</feature>
<feature type="transmembrane region" description="Helical" evidence="1">
    <location>
        <begin position="49"/>
        <end position="69"/>
    </location>
</feature>
<feature type="transmembrane region" description="Helical" evidence="1">
    <location>
        <begin position="91"/>
        <end position="111"/>
    </location>
</feature>
<feature type="transmembrane region" description="Helical" evidence="1">
    <location>
        <begin position="138"/>
        <end position="158"/>
    </location>
</feature>
<feature type="transmembrane region" description="Helical" evidence="1">
    <location>
        <begin position="167"/>
        <end position="187"/>
    </location>
</feature>
<feature type="transmembrane region" description="Helical" evidence="1">
    <location>
        <begin position="212"/>
        <end position="232"/>
    </location>
</feature>
<feature type="transmembrane region" description="Helical" evidence="1">
    <location>
        <begin position="236"/>
        <end position="256"/>
    </location>
</feature>
<feature type="transmembrane region" description="Helical" evidence="1">
    <location>
        <begin position="269"/>
        <end position="289"/>
    </location>
</feature>
<feature type="transmembrane region" description="Helical" evidence="1">
    <location>
        <begin position="312"/>
        <end position="332"/>
    </location>
</feature>
<feature type="transmembrane region" description="Helical" evidence="1">
    <location>
        <begin position="344"/>
        <end position="364"/>
    </location>
</feature>
<feature type="transmembrane region" description="Helical" evidence="1">
    <location>
        <begin position="379"/>
        <end position="399"/>
    </location>
</feature>
<feature type="transmembrane region" description="Helical" evidence="1">
    <location>
        <begin position="413"/>
        <end position="433"/>
    </location>
</feature>
<feature type="transmembrane region" description="Helical" evidence="1">
    <location>
        <begin position="458"/>
        <end position="478"/>
    </location>
</feature>
<comment type="function">
    <text evidence="1">Probable proton-dependent permease that transports dipeptides.</text>
</comment>
<comment type="subcellular location">
    <subcellularLocation>
        <location evidence="1">Cell inner membrane</location>
        <topology evidence="1">Multi-pass membrane protein</topology>
    </subcellularLocation>
</comment>
<comment type="similarity">
    <text evidence="1">Belongs to the major facilitator superfamily. Proton-dependent oligopeptide transporter (POT/PTR) (TC 2.A.17) family. DtpD subfamily.</text>
</comment>
<protein>
    <recommendedName>
        <fullName evidence="1">Dipeptide permease D</fullName>
    </recommendedName>
</protein>
<evidence type="ECO:0000255" key="1">
    <source>
        <dbReference type="HAMAP-Rule" id="MF_01880"/>
    </source>
</evidence>
<dbReference type="EMBL" id="CP000647">
    <property type="protein sequence ID" value="ABR76163.1"/>
    <property type="molecule type" value="Genomic_DNA"/>
</dbReference>
<dbReference type="RefSeq" id="WP_004199663.1">
    <property type="nucleotide sequence ID" value="NC_009648.1"/>
</dbReference>
<dbReference type="SMR" id="A6T6E2"/>
<dbReference type="STRING" id="272620.KPN_00720"/>
<dbReference type="PaxDb" id="272620-KPN_00720"/>
<dbReference type="EnsemblBacteria" id="ABR76163">
    <property type="protein sequence ID" value="ABR76163"/>
    <property type="gene ID" value="KPN_00720"/>
</dbReference>
<dbReference type="KEGG" id="kpn:KPN_00720"/>
<dbReference type="HOGENOM" id="CLU_004790_0_0_6"/>
<dbReference type="Proteomes" id="UP000000265">
    <property type="component" value="Chromosome"/>
</dbReference>
<dbReference type="GO" id="GO:0005886">
    <property type="term" value="C:plasma membrane"/>
    <property type="evidence" value="ECO:0007669"/>
    <property type="project" value="UniProtKB-SubCell"/>
</dbReference>
<dbReference type="GO" id="GO:0071916">
    <property type="term" value="F:dipeptide transmembrane transporter activity"/>
    <property type="evidence" value="ECO:0007669"/>
    <property type="project" value="UniProtKB-UniRule"/>
</dbReference>
<dbReference type="GO" id="GO:0015333">
    <property type="term" value="F:peptide:proton symporter activity"/>
    <property type="evidence" value="ECO:0007669"/>
    <property type="project" value="UniProtKB-UniRule"/>
</dbReference>
<dbReference type="GO" id="GO:0015031">
    <property type="term" value="P:protein transport"/>
    <property type="evidence" value="ECO:0007669"/>
    <property type="project" value="UniProtKB-KW"/>
</dbReference>
<dbReference type="CDD" id="cd17346">
    <property type="entry name" value="MFS_DtpA_like"/>
    <property type="match status" value="1"/>
</dbReference>
<dbReference type="FunFam" id="1.20.1250.20:FF:000035">
    <property type="entry name" value="Dipeptide permease D"/>
    <property type="match status" value="1"/>
</dbReference>
<dbReference type="Gene3D" id="1.20.1250.20">
    <property type="entry name" value="MFS general substrate transporter like domains"/>
    <property type="match status" value="1"/>
</dbReference>
<dbReference type="HAMAP" id="MF_01880">
    <property type="entry name" value="PTR2_DtpD_subfam"/>
    <property type="match status" value="1"/>
</dbReference>
<dbReference type="InterPro" id="IPR023777">
    <property type="entry name" value="AA/pep_transptr_DtpD"/>
</dbReference>
<dbReference type="InterPro" id="IPR005279">
    <property type="entry name" value="Dipep/tripep_permease"/>
</dbReference>
<dbReference type="InterPro" id="IPR020846">
    <property type="entry name" value="MFS_dom"/>
</dbReference>
<dbReference type="InterPro" id="IPR036259">
    <property type="entry name" value="MFS_trans_sf"/>
</dbReference>
<dbReference type="InterPro" id="IPR050171">
    <property type="entry name" value="MFS_Transporters"/>
</dbReference>
<dbReference type="InterPro" id="IPR000109">
    <property type="entry name" value="POT_fam"/>
</dbReference>
<dbReference type="InterPro" id="IPR018456">
    <property type="entry name" value="PTR2_symporter_CS"/>
</dbReference>
<dbReference type="NCBIfam" id="NF012006">
    <property type="entry name" value="PRK15462.1"/>
    <property type="match status" value="1"/>
</dbReference>
<dbReference type="NCBIfam" id="TIGR00924">
    <property type="entry name" value="yjdL_sub1_fam"/>
    <property type="match status" value="1"/>
</dbReference>
<dbReference type="PANTHER" id="PTHR23517:SF15">
    <property type="entry name" value="PROTON-DEPENDENT OLIGOPEPTIDE FAMILY TRANSPORT PROTEIN"/>
    <property type="match status" value="1"/>
</dbReference>
<dbReference type="PANTHER" id="PTHR23517">
    <property type="entry name" value="RESISTANCE PROTEIN MDTM, PUTATIVE-RELATED-RELATED"/>
    <property type="match status" value="1"/>
</dbReference>
<dbReference type="Pfam" id="PF00854">
    <property type="entry name" value="PTR2"/>
    <property type="match status" value="1"/>
</dbReference>
<dbReference type="SUPFAM" id="SSF103473">
    <property type="entry name" value="MFS general substrate transporter"/>
    <property type="match status" value="2"/>
</dbReference>
<dbReference type="PROSITE" id="PS50850">
    <property type="entry name" value="MFS"/>
    <property type="match status" value="1"/>
</dbReference>
<dbReference type="PROSITE" id="PS01022">
    <property type="entry name" value="PTR2_1"/>
    <property type="match status" value="1"/>
</dbReference>
<dbReference type="PROSITE" id="PS01023">
    <property type="entry name" value="PTR2_2"/>
    <property type="match status" value="1"/>
</dbReference>
<name>DTPD_KLEP7</name>